<organismHost>
    <name type="scientific">Mus musculus domesticus</name>
    <name type="common">western European house mouse</name>
    <dbReference type="NCBI Taxonomy" id="10092"/>
</organismHost>
<sequence>MQSGFDRCLCTPNARVFWERGQVYCTRCLAARPLLPLSQQHPRLGALGLFYRPASPLSWEAPVTYPTKECRPGGMCWLSSIYPIARMTSGNHNFQARLNFIASVVYRDGKLTSKHLEEDFEVYSRGCRWYPITGPVPGIALYANAVHVSDESFPGATHVLSNLPLPQQPLRKGLCPFADARANVWRYKGNTVFVSPQGYLWTTGSNDSVPEPWGEDRRLCEKIISSLPADHLVKINFSNYPFDYSFTGGDGAGFVVFPCKERDTKFSKCWEKIFEDHSGWMAACEEADLADRMGYRTPAGVAGPYLARRLQVRGLRAVVKPENNDYIVWALGVPESYIRHVSRAGEPVEEFFVKVGEFSIVSNCVVTPHPKFRFQTRKYYGYSPPGDGACGLHCISAMLNDIFGDSFTTRLGKCSRDSSEWLSDQDLYQLVMTANLPATIGHCPSAIYKLDCVNQHWTVTKRKGDRAVGRLAPDCLRGVCGECEMGIHIGADTDLSPIVELQLAQDVSPRPGALLWFLELHELCVVDDDFAHAIARAGEEYRRAMGIPRDDWVILAELMTENCRTRHQVLEKLQRGLQLQASSRPSSPASVSPASSVDLSAAGLLLSGTESDKEAVVAVNDGCYTVLGFDKNEATKSEQDLATDLFCDLVKPMETSTTKLESRKILEAAAKALESCKPKRKRSRKKKTRTPSPTCSVDAAVAEPTSVNSLGNQDTRETCASEKKAEKCPTPTPPPRPKRAALKNSNSGCVLKDIIWNQTGPGVKCLTIVEDVRAFLKGITPPGGVLSTRSRITKHIVDHFHSICEQTPELVLAHAEHQAKNLHELLASETAKLILGIGEDPLKKLVGSQRSLPRRLGFGAWLGGQQKTSGGCGEREFKDVGRKSGAERTPSKRDLGVSLGDQLSQDGARRLSSSTACEIKESVPPIIDSGGGLSQKFMAWLNHQVFVLSSHLLAVWSFIFGSRQVLGVFDYVYTLFCLCCVLLCFYLPAIGFMTLVGCVFGSPWRVRLSVFSVWLCVAVVVFQEVLPEPGAVCTSASAERAAALERYTSNGVHRPVNHLSVGLVGTVAGFVARSVGGPRRYWFYFLRLMVLLDLGLVFLAVALRGSCKKCFCKCVRTASHEVQLRVFPSTKVARTTLEAICDMYSAPRVDPIFIATGVRGCWTGSVSPHQVTEKPVSYSNLDDKKISNKTVVPPPTDPQQAVRCLKVLQCGGSIQDVSVPEVKKVTKVPFKAPFFPNVTIDPECYIVVDPVTYSAAMRGGYGVSHLIVGLGDFAEVNGLRFVSGGQIADFVCLGLYVLLNFLLSAWLSSPVSCGRGTNDPWCRNPFSYPVVGQGVMCNSHLCVAEDGLTSPMTLSYSLIDWALMVAIMATVAIFFAKISLLVDVVCVFCCLLMYAFPSLSIAAFGFPFVLCKVSLHPITLVWVQFFLLAVNVWAGVASVVVLISSWFLARATSSLGLITPYDVHMITATPRGASSLASAPEGTYLAAVRRSALTGRCCMFVPTNFGSVLEGSLRTRGCAKNVVSVFGSASGSGGVFTINGNPVVVTASHLLSDGKARVSCVGFSQCLDFKCAGDYAFARVANWKGDAPKAELSHRRGRAYCSPLVGLSLDLLGKNSAFCFTKCGDSGSPVVDEDGNLLGIHTGSNKRGSGMVTTHGGKTLGMANVKLSEMCPHYSGPGVPVSTVKLPKHLVVDVETVSSDLVAVVESLPALEGALSSMQLLCVFFFLWRLIHVPDVPVIRIAFFFLNEILPVMLARLMFSFALSLFFCVHWLFCSSVAVAFGDCCSKSVTGYSVQVLLLRLVIAALNRPCGPFGFSLLGQLSQCCLMLCLLDIELQLLGCLYLGQLLMWPPKEIFFHPTGQFMFLPLFLSLFKRNALADMLVGNGCFDAAFFLKYFAEGNLRDGVSDSCNMTPEGLTAALAITLSDDDLEFLQRHSEFKCFVSASNMRNGAKEFIESAYARALRAQLAATDKIKASKSILAKLESFAGGVVTQVEPGDVVVVLGKKVIGDLVEVVINDAKHVIRVIETRTMAGTQFSVGTICGDLENACEDPSGLVKTSKKQARRQKRTGLGTEVVGTVVIDGVSYNKVWHIATGDVTYEGCLVTENPQLRPLGMTTIGRFQEFIRKHGEKVKTSVEKYPVGKKKSVEFNITTYLLDGEEYDVPDHEPLEWTITIGESDLEAERLTVDQALRHMGHDSLLTAKEKEKLARIIESLNGLQQASALNCLATSGLDRCTRGGLTVSGDAVKLVRYHSRTFSIGDVNLKVMGREEYGRTVGKQGHCLVANLVDGVVVMRKHEPSLVDVLLTGEDADLISPTHGPGNTGVHGFTWDFEAPPTDLELELSEQIITACSIRRGDAPSLDLPYKLHPVRGNPYRDRGVLYNTRFGDIKYLTPQKTKEPLHAAACFNPKGVPVSDSETLVATTLPHGFELYVPTIPQSVLEYLDSRPMHRKCCVRAVVRGLAECDLQKFDLSRQGFVLPGVLYMVRRYLCRLVGIRRRLFLPSTYPAKNSMAGINGNRFPTHVVQSHPDIDALCERACKEHWQTVTPCTLKKQYCSKAKTRTILGTNNFVALGLRSALSGVTQGFMRKGIGSPICLGKNKFTPLPTKVSGRCLEADLASCDRSTPAIIRWFTTNLLFELAGPEEWIPSYVLNCCHDAVSTMSGCFDKRGGLSSGDPVTSVSNTVYSLVIYAQHMVLSAFRCGHKVGGLFLRDSLEMEQLFELQPLLVYSDDVVLYDESSELPNYHFFVDHLDLMLGFKTDRSKTVITSDPQFPGCRIAAGRVLVPQRDRILAALAYHMKASCVSDYFASAAAILMDACACCDYDEDWYFDLVCGIADCARKEGFRFPGPSFYVDMWKRLSVEEKKKCRTCAHCGAPSTLVSSCGLNLCDYHGHGHPHCPVVLPCGHAVGSGVCDGCSSPVMSLNTELDKLLACVPYHPPKVELLSVNDGVSSLPPGRYQARGGVVSVRRDILGNVVDLPDGDYQVMKVAQTCADICMVSINSHILRSQFITGAPGTGKTTYLLSVVRDDDVIYTPTHRTMLDVVKALGTCRFDPPKDTPLEFPVPSRTGPCVRLIRAGFIPGRVSYLDEAAYCNPLDVLKILSKTPLVCVGDLNQLPPVDFIGPCYAFALMLGRQLIEVFRFGPSIVNPIKKFYREELVSRGPDTGVKFLKSYQPYGQVLTPYHRDRVDGAITIDSSQGCTYDVITVYLPTPKSLNSARALVAITRARFYVFVYDPHNQLEQYLNMSEHEPAGAVAFWCGEQPMMISEGRVQRLSGPAQTTDPKLQQLMGLEGTASPLPQVAHNLGFYYSPDLVQFARIPSELCKHWPVVTAQNRTDWPDRLVCSMSKIDKCSRAIFCAGYHVGPSVFLGVPGVVSYYLTKFLKGKPVPLPDSLMSTGRIALNVREYLDEKEMEFSSRCPHAFIGEVKGSNVGGCHHVTSRYLPPVLVPGSVVKIGVSCPGKAAKELCTVTDVYLPELDPYLNPPTKSMDYKLLVDFQPVKLMVWKDATAYFHEGIRPMESMSRFLKVPQEEGVFFDLDEFVTNAKVSKLPCKYSVSANQFLTDVVLSMTHPSLAPPDYELLFARAYCVPGLDVGTLNAYIYRRGPSTYTTSNIARLVKDICCPVGCKGSGYMFPK</sequence>
<feature type="chain" id="PRO_0000036631" description="Replicase polyprotein 1ab">
    <location>
        <begin position="1"/>
        <end position="3637"/>
    </location>
</feature>
<feature type="chain" id="PRO_0000036633" description="Nsp1-alpha papain-like cysteine proteinase" evidence="1">
    <location>
        <begin position="1"/>
        <end status="unknown"/>
    </location>
</feature>
<feature type="chain" id="PRO_0000036634" description="Nsp1-beta papain-like cysteine proteinase" evidence="1">
    <location>
        <begin status="unknown"/>
        <end position="380"/>
    </location>
</feature>
<feature type="chain" id="PRO_0000036635" description="Nsp2 cysteine proteinase" evidence="1">
    <location>
        <begin position="381"/>
        <end position="1284"/>
    </location>
</feature>
<feature type="chain" id="PRO_0000036636" description="Non-structural protein 3" evidence="1">
    <location>
        <begin position="1285"/>
        <end position="1510"/>
    </location>
</feature>
<feature type="chain" id="PRO_0000036637" description="3C-like serine proteinase" evidence="1">
    <location>
        <begin position="1511"/>
        <end position="1712"/>
    </location>
</feature>
<feature type="chain" id="PRO_0000036638" description="Non-structural protein 5-6-7" evidence="1">
    <location>
        <begin position="1713"/>
        <end position="2181"/>
    </location>
</feature>
<feature type="chain" id="PRO_0000423110" description="Non-structural protein 5" evidence="1">
    <location>
        <begin position="1713"/>
        <end position="1898"/>
    </location>
</feature>
<feature type="chain" id="PRO_0000423111" description="Non-structural protein 6" evidence="1">
    <location>
        <begin position="1899"/>
        <end position="1914"/>
    </location>
</feature>
<feature type="chain" id="PRO_0000423112" description="Non-structural protein 7-alpha" evidence="1">
    <location>
        <begin position="1915"/>
        <end position="2046"/>
    </location>
</feature>
<feature type="chain" id="PRO_0000423113" description="Non-structural protein 7-beta" evidence="1">
    <location>
        <begin position="2047"/>
        <end position="2181"/>
    </location>
</feature>
<feature type="chain" id="PRO_0000036639" description="RNA-directed RNA polymerase" evidence="1">
    <location>
        <begin position="2182"/>
        <end position="2864"/>
    </location>
</feature>
<feature type="chain" id="PRO_0000036640" description="Non-structural protein 8" evidence="1">
    <location>
        <begin position="2182"/>
        <end position="2226"/>
    </location>
</feature>
<feature type="chain" id="PRO_0000036641" description="Helicase" evidence="1">
    <location>
        <begin position="2865"/>
        <end position="3293"/>
    </location>
</feature>
<feature type="chain" id="PRO_0000036642" description="Uridylate-specific endoribonuclease nsp11" evidence="1">
    <location>
        <begin position="3294"/>
        <end position="3515"/>
    </location>
</feature>
<feature type="chain" id="PRO_0000036643" description="Non-structural protein 12" evidence="1">
    <location>
        <begin position="3516"/>
        <end position="3637"/>
    </location>
</feature>
<feature type="transmembrane region" description="Helical" evidence="4">
    <location>
        <begin position="940"/>
        <end position="960"/>
    </location>
</feature>
<feature type="transmembrane region" description="Helical" evidence="4">
    <location>
        <begin position="981"/>
        <end position="1001"/>
    </location>
</feature>
<feature type="transmembrane region" description="Helical" evidence="4">
    <location>
        <begin position="1083"/>
        <end position="1103"/>
    </location>
</feature>
<feature type="transmembrane region" description="Helical" evidence="4">
    <location>
        <begin position="1287"/>
        <end position="1307"/>
    </location>
</feature>
<feature type="transmembrane region" description="Helical" evidence="4">
    <location>
        <begin position="1362"/>
        <end position="1382"/>
    </location>
</feature>
<feature type="transmembrane region" description="Helical" evidence="4">
    <location>
        <begin position="1390"/>
        <end position="1410"/>
    </location>
</feature>
<feature type="transmembrane region" description="Helical" evidence="4">
    <location>
        <begin position="1423"/>
        <end position="1443"/>
    </location>
</feature>
<feature type="transmembrane region" description="Helical" evidence="4">
    <location>
        <begin position="1735"/>
        <end position="1755"/>
    </location>
</feature>
<feature type="transmembrane region" description="Helical" evidence="4">
    <location>
        <begin position="1761"/>
        <end position="1781"/>
    </location>
</feature>
<feature type="transmembrane region" description="Helical" evidence="4">
    <location>
        <begin position="1801"/>
        <end position="1821"/>
    </location>
</feature>
<feature type="transmembrane region" description="Helical" evidence="4">
    <location>
        <begin position="1824"/>
        <end position="1844"/>
    </location>
</feature>
<feature type="transmembrane region" description="Helical" evidence="4">
    <location>
        <begin position="1853"/>
        <end position="1873"/>
    </location>
</feature>
<feature type="domain" description="Peptidase C31" evidence="8">
    <location>
        <begin position="69"/>
        <end position="181"/>
    </location>
</feature>
<feature type="domain" description="Peptidase C32" evidence="9">
    <location>
        <begin position="262"/>
        <end position="381"/>
    </location>
</feature>
<feature type="domain" description="Peptidase C33" evidence="7">
    <location>
        <begin position="381"/>
        <end position="486"/>
    </location>
</feature>
<feature type="domain" description="Peptidase S32" evidence="6">
    <location>
        <begin position="1511"/>
        <end position="1712"/>
    </location>
</feature>
<feature type="domain" description="NiRAN" evidence="11">
    <location>
        <begin position="2214"/>
        <end position="2372"/>
    </location>
</feature>
<feature type="domain" description="RdRp catalytic" evidence="5">
    <location>
        <begin position="2611"/>
        <end position="2745"/>
    </location>
</feature>
<feature type="domain" description="AV ZBD" evidence="10">
    <location>
        <begin position="2865"/>
        <end position="2928"/>
    </location>
</feature>
<feature type="domain" description="(+)RNA virus helicase ATP-binding">
    <location>
        <begin position="2985"/>
        <end position="3137"/>
    </location>
</feature>
<feature type="domain" description="(+)RNA virus helicase C-terminal">
    <location>
        <begin position="3138"/>
        <end position="3269"/>
    </location>
</feature>
<feature type="domain" description="AV-Nsp11N/CoV-Nsp15M" evidence="13">
    <location>
        <begin position="3293"/>
        <end position="3389"/>
    </location>
</feature>
<feature type="domain" description="NendoU" evidence="12">
    <location>
        <begin position="3391"/>
        <end position="3513"/>
    </location>
</feature>
<feature type="zinc finger region" description="C4-type; atypical">
    <location>
        <begin position="8"/>
        <end position="28"/>
    </location>
</feature>
<feature type="region of interest" description="PCP1-alpha">
    <location>
        <begin position="69"/>
        <end position="183"/>
    </location>
</feature>
<feature type="region of interest" description="PCP1-beta">
    <location>
        <begin position="262"/>
        <end position="380"/>
    </location>
</feature>
<feature type="region of interest" description="Disordered" evidence="14">
    <location>
        <begin position="676"/>
        <end position="743"/>
    </location>
</feature>
<feature type="region of interest" description="Disordered" evidence="14">
    <location>
        <begin position="865"/>
        <end position="899"/>
    </location>
</feature>
<feature type="region of interest" description="HD1">
    <location>
        <begin position="979"/>
        <end position="1103"/>
    </location>
</feature>
<feature type="region of interest" description="HD2">
    <location>
        <begin position="1287"/>
        <end position="1446"/>
    </location>
</feature>
<feature type="region of interest" description="HD3">
    <location>
        <begin position="1735"/>
        <end position="1872"/>
    </location>
</feature>
<feature type="compositionally biased region" description="Basic residues" evidence="14">
    <location>
        <begin position="678"/>
        <end position="689"/>
    </location>
</feature>
<feature type="compositionally biased region" description="Basic and acidic residues" evidence="14">
    <location>
        <begin position="714"/>
        <end position="727"/>
    </location>
</feature>
<feature type="compositionally biased region" description="Basic and acidic residues" evidence="14">
    <location>
        <begin position="873"/>
        <end position="895"/>
    </location>
</feature>
<feature type="active site" description="For Nsp1-alpha papain-like cysteine proteinase activity" evidence="8">
    <location>
        <position position="76"/>
    </location>
</feature>
<feature type="active site" description="For Nsp1-alpha papain-like cysteine proteinase activity" evidence="8">
    <location>
        <position position="147"/>
    </location>
</feature>
<feature type="active site" description="For Nsp1-beta papain-like cysteine proteinase activity" evidence="9">
    <location>
        <position position="269"/>
    </location>
</feature>
<feature type="active site" description="For Nsp1-beta papain-like cysteine proteinase activity" evidence="9">
    <location>
        <position position="340"/>
    </location>
</feature>
<feature type="active site" description="For Nsp2 cysteine proteinase activity" evidence="7">
    <location>
        <position position="390"/>
    </location>
</feature>
<feature type="active site" description="For Nsp2 cysteine proteinase activity" evidence="7">
    <location>
        <position position="456"/>
    </location>
</feature>
<feature type="active site" description="Charge relay system; for 3C-like serine proteinase activity" evidence="6">
    <location>
        <position position="1549"/>
    </location>
</feature>
<feature type="active site" description="Charge relay system; for 3C-like serine proteinase activity" evidence="6">
    <location>
        <position position="1574"/>
    </location>
</feature>
<feature type="active site" description="Charge relay system; for 3C-like serine proteinase activity" evidence="6">
    <location>
        <position position="1626"/>
    </location>
</feature>
<feature type="active site" evidence="12">
    <location>
        <position position="3422"/>
    </location>
</feature>
<feature type="active site" evidence="12">
    <location>
        <position position="3437"/>
    </location>
</feature>
<feature type="active site" evidence="12">
    <location>
        <position position="3466"/>
    </location>
</feature>
<feature type="binding site" evidence="10">
    <location>
        <position position="2871"/>
    </location>
    <ligand>
        <name>Zn(2+)</name>
        <dbReference type="ChEBI" id="CHEBI:29105"/>
        <label>1</label>
    </ligand>
</feature>
<feature type="binding site" evidence="10">
    <location>
        <position position="2874"/>
    </location>
    <ligand>
        <name>Zn(2+)</name>
        <dbReference type="ChEBI" id="CHEBI:29105"/>
        <label>1</label>
    </ligand>
</feature>
<feature type="binding site" evidence="10">
    <location>
        <position position="2884"/>
    </location>
    <ligand>
        <name>Zn(2+)</name>
        <dbReference type="ChEBI" id="CHEBI:29105"/>
        <label>2</label>
    </ligand>
</feature>
<feature type="binding site" evidence="10">
    <location>
        <position position="2889"/>
    </location>
    <ligand>
        <name>Zn(2+)</name>
        <dbReference type="ChEBI" id="CHEBI:29105"/>
        <label>1</label>
    </ligand>
</feature>
<feature type="binding site" evidence="10">
    <location>
        <position position="2892"/>
    </location>
    <ligand>
        <name>Zn(2+)</name>
        <dbReference type="ChEBI" id="CHEBI:29105"/>
        <label>1</label>
    </ligand>
</feature>
<feature type="binding site" evidence="10">
    <location>
        <position position="2894"/>
    </location>
    <ligand>
        <name>Zn(2+)</name>
        <dbReference type="ChEBI" id="CHEBI:29105"/>
        <label>2</label>
    </ligand>
</feature>
<feature type="binding site" evidence="10">
    <location>
        <position position="2896"/>
    </location>
    <ligand>
        <name>Zn(2+)</name>
        <dbReference type="ChEBI" id="CHEBI:29105"/>
        <label>2</label>
    </ligand>
</feature>
<feature type="binding site" evidence="10">
    <location>
        <position position="2898"/>
    </location>
    <ligand>
        <name>Zn(2+)</name>
        <dbReference type="ChEBI" id="CHEBI:29105"/>
        <label>2</label>
    </ligand>
</feature>
<feature type="binding site" evidence="10">
    <location>
        <position position="2905"/>
    </location>
    <ligand>
        <name>Zn(2+)</name>
        <dbReference type="ChEBI" id="CHEBI:29105"/>
        <label>3</label>
    </ligand>
</feature>
<feature type="binding site" evidence="10">
    <location>
        <position position="2907"/>
    </location>
    <ligand>
        <name>Zn(2+)</name>
        <dbReference type="ChEBI" id="CHEBI:29105"/>
        <label>3</label>
    </ligand>
</feature>
<feature type="binding site" evidence="10">
    <location>
        <position position="2914"/>
    </location>
    <ligand>
        <name>Zn(2+)</name>
        <dbReference type="ChEBI" id="CHEBI:29105"/>
        <label>3</label>
    </ligand>
</feature>
<feature type="binding site" evidence="10">
    <location>
        <position position="2917"/>
    </location>
    <ligand>
        <name>Zn(2+)</name>
        <dbReference type="ChEBI" id="CHEBI:29105"/>
        <label>3</label>
    </ligand>
</feature>
<feature type="binding site" evidence="1">
    <location>
        <begin position="3013"/>
        <end position="3020"/>
    </location>
    <ligand>
        <name>ATP</name>
        <dbReference type="ChEBI" id="CHEBI:30616"/>
    </ligand>
</feature>
<feature type="site" description="Cleavage; by autolysis" evidence="4">
    <location>
        <begin position="181"/>
        <end position="182"/>
    </location>
</feature>
<feature type="site" description="Cleavage; by autolysis" evidence="4">
    <location>
        <begin position="381"/>
        <end position="382"/>
    </location>
</feature>
<feature type="site" description="Cleavage; by CP2" evidence="1">
    <location>
        <begin position="1284"/>
        <end position="1285"/>
    </location>
</feature>
<feature type="site" description="Cleavage; by 3CLSP" evidence="1">
    <location>
        <begin position="1510"/>
        <end position="1511"/>
    </location>
</feature>
<feature type="site" description="Cleavage; by 3CLSP" evidence="1">
    <location>
        <begin position="1712"/>
        <end position="1713"/>
    </location>
</feature>
<feature type="site" description="Cleavage; by 3CLSP" evidence="1">
    <location>
        <begin position="1898"/>
        <end position="1899"/>
    </location>
</feature>
<feature type="site" description="Cleavage; by 3CLSP" evidence="1">
    <location>
        <begin position="1914"/>
        <end position="1915"/>
    </location>
</feature>
<feature type="site" description="Cleavage; by 3CLSP" evidence="1">
    <location>
        <begin position="2046"/>
        <end position="2047"/>
    </location>
</feature>
<feature type="site" description="Cleavage; by 3CLSP" evidence="1">
    <location>
        <begin position="2181"/>
        <end position="2182"/>
    </location>
</feature>
<feature type="site" description="Cleavage; by 3CLSP" evidence="1">
    <location>
        <begin position="2864"/>
        <end position="2865"/>
    </location>
</feature>
<feature type="site" description="Cleavage; by 3CLSP" evidence="1">
    <location>
        <begin position="3293"/>
        <end position="3294"/>
    </location>
</feature>
<feature type="site" description="Cleavage; by 3CLSP" evidence="1">
    <location>
        <begin position="3515"/>
        <end position="3516"/>
    </location>
</feature>
<feature type="splice variant" id="VSP_032888" description="In isoform Replicase polyprotein 1a." evidence="15">
    <location>
        <begin position="2227"/>
        <end position="3637"/>
    </location>
</feature>
<feature type="unsure residue" description="S or P">
    <location>
        <position position="1698"/>
    </location>
</feature>
<feature type="unsure residue" description="S or F">
    <location>
        <position position="2243"/>
    </location>
</feature>
<organism>
    <name type="scientific">Lactate dehydrogenase elevating virus (strain C)</name>
    <name type="common">LDV</name>
    <dbReference type="NCBI Taxonomy" id="300015"/>
    <lineage>
        <taxon>Viruses</taxon>
        <taxon>Riboviria</taxon>
        <taxon>Orthornavirae</taxon>
        <taxon>Pisuviricota</taxon>
        <taxon>Pisoniviricetes</taxon>
        <taxon>Nidovirales</taxon>
        <taxon>Arnidovirineae</taxon>
        <taxon>Arteriviridae</taxon>
        <taxon>Variarterivirinae</taxon>
        <taxon>Gammaarterivirus</taxon>
        <taxon>Gammaarterivirus lacdeh</taxon>
    </lineage>
</organism>
<dbReference type="EC" id="3.4.22.-"/>
<dbReference type="EC" id="3.4.21.-"/>
<dbReference type="EC" id="2.7.7.48"/>
<dbReference type="EC" id="3.6.4.12"/>
<dbReference type="EC" id="3.6.4.13"/>
<dbReference type="EC" id="4.6.1.-"/>
<dbReference type="EMBL" id="L13298">
    <property type="protein sequence ID" value="AAA74103.1"/>
    <property type="molecule type" value="Genomic_RNA"/>
</dbReference>
<dbReference type="EMBL" id="L13298">
    <property type="protein sequence ID" value="AAA74104.1"/>
    <property type="status" value="ALT_INIT"/>
    <property type="molecule type" value="Genomic_RNA"/>
</dbReference>
<dbReference type="SMR" id="Q06502"/>
<dbReference type="GO" id="GO:0033644">
    <property type="term" value="C:host cell membrane"/>
    <property type="evidence" value="ECO:0007669"/>
    <property type="project" value="UniProtKB-SubCell"/>
</dbReference>
<dbReference type="GO" id="GO:0044220">
    <property type="term" value="C:host cell perinuclear region of cytoplasm"/>
    <property type="evidence" value="ECO:0007669"/>
    <property type="project" value="UniProtKB-SubCell"/>
</dbReference>
<dbReference type="GO" id="GO:0016020">
    <property type="term" value="C:membrane"/>
    <property type="evidence" value="ECO:0007669"/>
    <property type="project" value="UniProtKB-KW"/>
</dbReference>
<dbReference type="GO" id="GO:0005524">
    <property type="term" value="F:ATP binding"/>
    <property type="evidence" value="ECO:0007669"/>
    <property type="project" value="UniProtKB-KW"/>
</dbReference>
<dbReference type="GO" id="GO:0016887">
    <property type="term" value="F:ATP hydrolysis activity"/>
    <property type="evidence" value="ECO:0007669"/>
    <property type="project" value="RHEA"/>
</dbReference>
<dbReference type="GO" id="GO:0004197">
    <property type="term" value="F:cysteine-type endopeptidase activity"/>
    <property type="evidence" value="ECO:0007669"/>
    <property type="project" value="InterPro"/>
</dbReference>
<dbReference type="GO" id="GO:0004519">
    <property type="term" value="F:endonuclease activity"/>
    <property type="evidence" value="ECO:0007669"/>
    <property type="project" value="UniProtKB-KW"/>
</dbReference>
<dbReference type="GO" id="GO:0016829">
    <property type="term" value="F:lyase activity"/>
    <property type="evidence" value="ECO:0007669"/>
    <property type="project" value="UniProtKB-KW"/>
</dbReference>
<dbReference type="GO" id="GO:0003723">
    <property type="term" value="F:RNA binding"/>
    <property type="evidence" value="ECO:0007669"/>
    <property type="project" value="InterPro"/>
</dbReference>
<dbReference type="GO" id="GO:0003724">
    <property type="term" value="F:RNA helicase activity"/>
    <property type="evidence" value="ECO:0007669"/>
    <property type="project" value="UniProtKB-EC"/>
</dbReference>
<dbReference type="GO" id="GO:0004540">
    <property type="term" value="F:RNA nuclease activity"/>
    <property type="evidence" value="ECO:0007669"/>
    <property type="project" value="UniProtKB-ARBA"/>
</dbReference>
<dbReference type="GO" id="GO:0003968">
    <property type="term" value="F:RNA-directed RNA polymerase activity"/>
    <property type="evidence" value="ECO:0007669"/>
    <property type="project" value="UniProtKB-KW"/>
</dbReference>
<dbReference type="GO" id="GO:0004252">
    <property type="term" value="F:serine-type endopeptidase activity"/>
    <property type="evidence" value="ECO:0007669"/>
    <property type="project" value="InterPro"/>
</dbReference>
<dbReference type="GO" id="GO:0070008">
    <property type="term" value="F:serine-type exopeptidase activity"/>
    <property type="evidence" value="ECO:0007669"/>
    <property type="project" value="InterPro"/>
</dbReference>
<dbReference type="GO" id="GO:0008270">
    <property type="term" value="F:zinc ion binding"/>
    <property type="evidence" value="ECO:0007669"/>
    <property type="project" value="UniProtKB-KW"/>
</dbReference>
<dbReference type="GO" id="GO:0006351">
    <property type="term" value="P:DNA-templated transcription"/>
    <property type="evidence" value="ECO:0007669"/>
    <property type="project" value="InterPro"/>
</dbReference>
<dbReference type="GO" id="GO:0006508">
    <property type="term" value="P:proteolysis"/>
    <property type="evidence" value="ECO:0007669"/>
    <property type="project" value="UniProtKB-KW"/>
</dbReference>
<dbReference type="GO" id="GO:0019082">
    <property type="term" value="P:viral protein processing"/>
    <property type="evidence" value="ECO:0007669"/>
    <property type="project" value="InterPro"/>
</dbReference>
<dbReference type="GO" id="GO:0039694">
    <property type="term" value="P:viral RNA genome replication"/>
    <property type="evidence" value="ECO:0007669"/>
    <property type="project" value="InterPro"/>
</dbReference>
<dbReference type="GO" id="GO:0075523">
    <property type="term" value="P:viral translational frameshifting"/>
    <property type="evidence" value="ECO:0007669"/>
    <property type="project" value="UniProtKB-KW"/>
</dbReference>
<dbReference type="CDD" id="cd21410">
    <property type="entry name" value="1B_av_Nsp10-like"/>
    <property type="match status" value="1"/>
</dbReference>
<dbReference type="CDD" id="cd23189">
    <property type="entry name" value="Arteriviridae_RdRp"/>
    <property type="match status" value="1"/>
</dbReference>
<dbReference type="CDD" id="cd22528">
    <property type="entry name" value="av_Nsp3_ER-remodelling"/>
    <property type="match status" value="1"/>
</dbReference>
<dbReference type="CDD" id="cd21160">
    <property type="entry name" value="NendoU_av_Nsp11-like"/>
    <property type="match status" value="1"/>
</dbReference>
<dbReference type="CDD" id="cd21166">
    <property type="entry name" value="NTD_av_Nsp11-like"/>
    <property type="match status" value="1"/>
</dbReference>
<dbReference type="CDD" id="cd18786">
    <property type="entry name" value="SF1_C"/>
    <property type="match status" value="1"/>
</dbReference>
<dbReference type="CDD" id="cd21405">
    <property type="entry name" value="ZBD_av_Nsp10-like"/>
    <property type="match status" value="1"/>
</dbReference>
<dbReference type="Gene3D" id="3.90.70.160">
    <property type="match status" value="1"/>
</dbReference>
<dbReference type="Gene3D" id="4.10.80.390">
    <property type="match status" value="1"/>
</dbReference>
<dbReference type="Gene3D" id="3.30.1330.220">
    <property type="entry name" value="Arterivirus nonstructural protein 7 alpha"/>
    <property type="match status" value="1"/>
</dbReference>
<dbReference type="Gene3D" id="3.90.70.70">
    <property type="entry name" value="Arterivirus papain-like cysteine protease beta domain"/>
    <property type="match status" value="1"/>
</dbReference>
<dbReference type="Gene3D" id="3.30.40.20">
    <property type="entry name" value="Chymotrypsin-like serine protease, domain 3"/>
    <property type="match status" value="1"/>
</dbReference>
<dbReference type="Gene3D" id="3.40.50.300">
    <property type="entry name" value="P-loop containing nucleotide triphosphate hydrolases"/>
    <property type="match status" value="1"/>
</dbReference>
<dbReference type="Gene3D" id="3.90.70.60">
    <property type="entry name" value="Porcine arterivirus-type cysteine proteinase alpha domain"/>
    <property type="match status" value="1"/>
</dbReference>
<dbReference type="Gene3D" id="2.40.10.10">
    <property type="entry name" value="Trypsin-like serine proteases"/>
    <property type="match status" value="2"/>
</dbReference>
<dbReference type="InterPro" id="IPR027351">
    <property type="entry name" value="(+)RNA_virus_helicase_core_dom"/>
</dbReference>
<dbReference type="InterPro" id="IPR031932">
    <property type="entry name" value="Arteri_nsp7a"/>
</dbReference>
<dbReference type="InterPro" id="IPR038451">
    <property type="entry name" value="Arteri_nsp7a_sf"/>
</dbReference>
<dbReference type="InterPro" id="IPR008743">
    <property type="entry name" value="Arterivirus_Nsp2_C33"/>
</dbReference>
<dbReference type="InterPro" id="IPR023338">
    <property type="entry name" value="Arterivirus_NSP4_peptidase"/>
</dbReference>
<dbReference type="InterPro" id="IPR046440">
    <property type="entry name" value="AV_NSP11N_COV_NSP15M"/>
</dbReference>
<dbReference type="InterPro" id="IPR008741">
    <property type="entry name" value="AV_PCPalpha"/>
</dbReference>
<dbReference type="InterPro" id="IPR038155">
    <property type="entry name" value="AV_PCPalpha_sf"/>
</dbReference>
<dbReference type="InterPro" id="IPR025773">
    <property type="entry name" value="AV_PCPbeta"/>
</dbReference>
<dbReference type="InterPro" id="IPR038154">
    <property type="entry name" value="AV_PCPbeta_sf"/>
</dbReference>
<dbReference type="InterPro" id="IPR023183">
    <property type="entry name" value="Chymotrypsin-like_C"/>
</dbReference>
<dbReference type="InterPro" id="IPR043502">
    <property type="entry name" value="DNA/RNA_pol_sf"/>
</dbReference>
<dbReference type="InterPro" id="IPR022230">
    <property type="entry name" value="DUF3756"/>
</dbReference>
<dbReference type="InterPro" id="IPR008760">
    <property type="entry name" value="EAV_peptidase_S32"/>
</dbReference>
<dbReference type="InterPro" id="IPR037227">
    <property type="entry name" value="EndoU-like"/>
</dbReference>
<dbReference type="InterPro" id="IPR043609">
    <property type="entry name" value="NendoU_nidovirus"/>
</dbReference>
<dbReference type="InterPro" id="IPR044863">
    <property type="entry name" value="NIRAN"/>
</dbReference>
<dbReference type="InterPro" id="IPR044348">
    <property type="entry name" value="NSP10_1B_Av"/>
</dbReference>
<dbReference type="InterPro" id="IPR027355">
    <property type="entry name" value="NSP10_Av_ZBD"/>
</dbReference>
<dbReference type="InterPro" id="IPR044320">
    <property type="entry name" value="NSP11_Av_N"/>
</dbReference>
<dbReference type="InterPro" id="IPR044314">
    <property type="entry name" value="NSP11_NendoU_Av"/>
</dbReference>
<dbReference type="InterPro" id="IPR054104">
    <property type="entry name" value="Nsp1alpha_Znf"/>
</dbReference>
<dbReference type="InterPro" id="IPR027417">
    <property type="entry name" value="P-loop_NTPase"/>
</dbReference>
<dbReference type="InterPro" id="IPR009003">
    <property type="entry name" value="Peptidase_S1_PA"/>
</dbReference>
<dbReference type="InterPro" id="IPR043504">
    <property type="entry name" value="Peptidase_S1_PA_chymotrypsin"/>
</dbReference>
<dbReference type="InterPro" id="IPR001205">
    <property type="entry name" value="RNA-dir_pol_C"/>
</dbReference>
<dbReference type="InterPro" id="IPR007094">
    <property type="entry name" value="RNA-dir_pol_PSvirus"/>
</dbReference>
<dbReference type="Pfam" id="PF16749">
    <property type="entry name" value="Arteri_nsp7a"/>
    <property type="match status" value="1"/>
</dbReference>
<dbReference type="Pfam" id="PF12581">
    <property type="entry name" value="DUF3756"/>
    <property type="match status" value="1"/>
</dbReference>
<dbReference type="Pfam" id="PF05410">
    <property type="entry name" value="Peptidase_C31"/>
    <property type="match status" value="1"/>
</dbReference>
<dbReference type="Pfam" id="PF05411">
    <property type="entry name" value="Peptidase_C32"/>
    <property type="match status" value="1"/>
</dbReference>
<dbReference type="Pfam" id="PF05412">
    <property type="entry name" value="Peptidase_C33"/>
    <property type="match status" value="1"/>
</dbReference>
<dbReference type="Pfam" id="PF05579">
    <property type="entry name" value="Peptidase_S32"/>
    <property type="match status" value="1"/>
</dbReference>
<dbReference type="Pfam" id="PF22049">
    <property type="entry name" value="PRRSV-NSP11_N"/>
    <property type="match status" value="1"/>
</dbReference>
<dbReference type="Pfam" id="PF00680">
    <property type="entry name" value="RdRP_1"/>
    <property type="match status" value="1"/>
</dbReference>
<dbReference type="Pfam" id="PF01443">
    <property type="entry name" value="Viral_helicase1"/>
    <property type="match status" value="1"/>
</dbReference>
<dbReference type="Pfam" id="PF21905">
    <property type="entry name" value="Zf-Nsp1alpha"/>
    <property type="match status" value="1"/>
</dbReference>
<dbReference type="SUPFAM" id="SSF56672">
    <property type="entry name" value="DNA/RNA polymerases"/>
    <property type="match status" value="1"/>
</dbReference>
<dbReference type="SUPFAM" id="SSF142877">
    <property type="entry name" value="EndoU-like"/>
    <property type="match status" value="1"/>
</dbReference>
<dbReference type="SUPFAM" id="SSF52540">
    <property type="entry name" value="P-loop containing nucleoside triphosphate hydrolases"/>
    <property type="match status" value="1"/>
</dbReference>
<dbReference type="SUPFAM" id="SSF50494">
    <property type="entry name" value="Trypsin-like serine proteases"/>
    <property type="match status" value="1"/>
</dbReference>
<dbReference type="PROSITE" id="PS51538">
    <property type="entry name" value="AV_CP"/>
    <property type="match status" value="1"/>
</dbReference>
<dbReference type="PROSITE" id="PS51961">
    <property type="entry name" value="AV_NSP11N_COV_NSP15M"/>
    <property type="match status" value="1"/>
</dbReference>
<dbReference type="PROSITE" id="PS51493">
    <property type="entry name" value="AV_NSP4_PRO"/>
    <property type="match status" value="1"/>
</dbReference>
<dbReference type="PROSITE" id="PS51539">
    <property type="entry name" value="AV_PCP_ALPHA"/>
    <property type="match status" value="1"/>
</dbReference>
<dbReference type="PROSITE" id="PS51540">
    <property type="entry name" value="AV_PCP_BETA"/>
    <property type="match status" value="1"/>
</dbReference>
<dbReference type="PROSITE" id="PS51652">
    <property type="entry name" value="AV_ZBD"/>
    <property type="match status" value="1"/>
</dbReference>
<dbReference type="PROSITE" id="PS51958">
    <property type="entry name" value="NENDOU"/>
    <property type="match status" value="1"/>
</dbReference>
<dbReference type="PROSITE" id="PS51947">
    <property type="entry name" value="NIRAN"/>
    <property type="match status" value="1"/>
</dbReference>
<dbReference type="PROSITE" id="PS51657">
    <property type="entry name" value="PSRV_HELICASE"/>
    <property type="match status" value="1"/>
</dbReference>
<dbReference type="PROSITE" id="PS50507">
    <property type="entry name" value="RDRP_SSRNA_POS"/>
    <property type="match status" value="1"/>
</dbReference>
<comment type="function">
    <text>The replicase polyprotein 1ab is a multifunctional protein: it contains the activities necessary for the transcription of negative stranded RNA, leader RNA, subgenomic mRNAs and progeny virion RNA as well as proteinases responsible for the cleavage of the polyprotein into functional products.</text>
</comment>
<comment type="function">
    <text evidence="1">The Nsp1 chain is essential for viral subgenomic mRNA synthesis.</text>
</comment>
<comment type="function">
    <text evidence="1">The 3C-like serine proteinase chain is responsible for the majority of cleavages as it cleaves the C-terminus of the polyprotein.</text>
</comment>
<comment type="function">
    <text evidence="1">The helicase chain, which contains a zinc finger structure, displays RNA and DNA duplex-unwinding activities with 5' to 3' polarity.</text>
</comment>
<comment type="function">
    <molecule>Uridylate-specific endoribonuclease nsp11</molecule>
    <text evidence="2 3">Plays a role in viral transcription/replication and prevents the simultaneous activation of host cell dsRNA sensors, such as MDA5/IFIH1, OAS, and PKR (By similarity). Acts by degrading the 5'-polyuridines generated during replication of the poly(A) region of viral genomic and subgenomic RNAs. Catalyzes a two-step reaction in which a 2'3'-cyclic phosphate (2'3'-cP) is first generated by 2'-O transesterification, which is then hydrolyzed to a 3'-phosphate (3'-P) (By similarity). If not degraded, poly(U) RNA would hybridize with poly(A) RNA tails and activate host dsRNA sensors (By similarity).</text>
</comment>
<comment type="catalytic activity">
    <reaction evidence="5">
        <text>RNA(n) + a ribonucleoside 5'-triphosphate = RNA(n+1) + diphosphate</text>
        <dbReference type="Rhea" id="RHEA:21248"/>
        <dbReference type="Rhea" id="RHEA-COMP:14527"/>
        <dbReference type="Rhea" id="RHEA-COMP:17342"/>
        <dbReference type="ChEBI" id="CHEBI:33019"/>
        <dbReference type="ChEBI" id="CHEBI:61557"/>
        <dbReference type="ChEBI" id="CHEBI:140395"/>
        <dbReference type="EC" id="2.7.7.48"/>
    </reaction>
</comment>
<comment type="catalytic activity">
    <reaction>
        <text>ATP + H2O = ADP + phosphate + H(+)</text>
        <dbReference type="Rhea" id="RHEA:13065"/>
        <dbReference type="ChEBI" id="CHEBI:15377"/>
        <dbReference type="ChEBI" id="CHEBI:15378"/>
        <dbReference type="ChEBI" id="CHEBI:30616"/>
        <dbReference type="ChEBI" id="CHEBI:43474"/>
        <dbReference type="ChEBI" id="CHEBI:456216"/>
        <dbReference type="EC" id="3.6.4.12"/>
    </reaction>
</comment>
<comment type="catalytic activity">
    <reaction>
        <text>ATP + H2O = ADP + phosphate + H(+)</text>
        <dbReference type="Rhea" id="RHEA:13065"/>
        <dbReference type="ChEBI" id="CHEBI:15377"/>
        <dbReference type="ChEBI" id="CHEBI:15378"/>
        <dbReference type="ChEBI" id="CHEBI:30616"/>
        <dbReference type="ChEBI" id="CHEBI:43474"/>
        <dbReference type="ChEBI" id="CHEBI:456216"/>
        <dbReference type="EC" id="3.6.4.13"/>
    </reaction>
</comment>
<comment type="catalytic activity">
    <molecule>Uridylate-specific endoribonuclease nsp11</molecule>
    <reaction evidence="3">
        <text>uridylyl-uridylyl-ribonucleotide-RNA = a 3'-end uridylyl-2',3'-cyclophospho-uridine-RNA + a 5'-end dephospho-ribonucleoside-RNA</text>
        <dbReference type="Rhea" id="RHEA:67732"/>
        <dbReference type="Rhea" id="RHEA-COMP:13936"/>
        <dbReference type="Rhea" id="RHEA-COMP:17334"/>
        <dbReference type="Rhea" id="RHEA-COMP:17335"/>
        <dbReference type="ChEBI" id="CHEBI:138284"/>
        <dbReference type="ChEBI" id="CHEBI:173079"/>
        <dbReference type="ChEBI" id="CHEBI:173080"/>
    </reaction>
</comment>
<comment type="subcellular location">
    <molecule>Nsp2 cysteine proteinase</molecule>
    <subcellularLocation>
        <location evidence="15">Host membrane</location>
        <topology evidence="15">Multi-pass membrane protein</topology>
    </subcellularLocation>
</comment>
<comment type="subcellular location">
    <molecule>Non-structural protein 3</molecule>
    <subcellularLocation>
        <location evidence="15">Host membrane</location>
        <topology evidence="15">Multi-pass membrane protein</topology>
    </subcellularLocation>
</comment>
<comment type="subcellular location">
    <molecule>Non-structural protein 5-6-7</molecule>
    <subcellularLocation>
        <location evidence="15">Host membrane</location>
        <topology evidence="15">Multi-pass membrane protein</topology>
    </subcellularLocation>
</comment>
<comment type="subcellular location">
    <molecule>3C-like serine proteinase</molecule>
    <subcellularLocation>
        <location evidence="15">Host cytoplasm</location>
    </subcellularLocation>
</comment>
<comment type="subcellular location">
    <molecule>RNA-directed RNA polymerase</molecule>
    <subcellularLocation>
        <location evidence="15">Host cytoplasm</location>
        <location evidence="15">Host perinuclear region</location>
    </subcellularLocation>
</comment>
<comment type="subcellular location">
    <molecule>Helicase</molecule>
    <subcellularLocation>
        <location evidence="15">Host cytoplasm</location>
        <location evidence="15">Host perinuclear region</location>
    </subcellularLocation>
</comment>
<comment type="alternative products">
    <event type="ribosomal frameshifting"/>
    <isoform>
        <id>Q06502-1</id>
        <name>Replicase polyprotein 1ab</name>
        <name>pp1ab</name>
        <sequence type="displayed"/>
    </isoform>
    <isoform>
        <id>Q06502-2</id>
        <name>Replicase polyprotein 1a</name>
        <name>pp1a</name>
        <name>ORF1a polyprotein</name>
        <sequence type="described" ref="VSP_032888"/>
    </isoform>
</comment>
<comment type="domain">
    <text evidence="1">The hydrophobic domains (HD) could mediate the membrane association of the replication complex and thereby alter the architecture of the host cell membrane.</text>
</comment>
<comment type="PTM">
    <text evidence="1">Specific enzymatic cleavages in vivo by its own proteases yield mature proteins. There are two alternative pathways for processing. Either nsp4-5 is cleaved, which represents the major pathway or the nsp5-6 and nsp6-7 are processed, which represents the minor pathway. The major pathway occurs when nsp2 acts as a cofactor for nsp4 (By similarity).</text>
</comment>
<comment type="miscellaneous">
    <molecule>Isoform Replicase polyprotein 1ab</molecule>
    <text>Produced by -1 ribosomal frameshifting at the 1a-1b genes boundary.</text>
</comment>
<comment type="miscellaneous">
    <molecule>Isoform Replicase polyprotein 1a</molecule>
    <text evidence="15">Produced by conventional translation.</text>
</comment>
<comment type="similarity">
    <text evidence="15">Belongs to the arteriviridae polyprotein family.</text>
</comment>
<comment type="sequence caution" evidence="15">
    <conflict type="erroneous initiation">
        <sequence resource="EMBL-CDS" id="AAA74104"/>
    </conflict>
</comment>
<protein>
    <recommendedName>
        <fullName>Replicase polyprotein 1ab</fullName>
    </recommendedName>
    <alternativeName>
        <fullName>ORF1ab polyprotein</fullName>
    </alternativeName>
    <component>
        <recommendedName>
            <fullName>Nsp1-alpha papain-like cysteine proteinase</fullName>
            <ecNumber>3.4.22.-</ecNumber>
        </recommendedName>
        <alternativeName>
            <fullName>PCP1-alpha</fullName>
        </alternativeName>
    </component>
    <component>
        <recommendedName>
            <fullName>Nsp1-beta papain-like cysteine proteinase</fullName>
            <ecNumber>3.4.22.-</ecNumber>
        </recommendedName>
        <alternativeName>
            <fullName>PCP1-beta</fullName>
        </alternativeName>
    </component>
    <component>
        <recommendedName>
            <fullName>Nsp2 cysteine proteinase</fullName>
            <ecNumber>3.4.22.-</ecNumber>
        </recommendedName>
        <alternativeName>
            <fullName>CP2</fullName>
            <shortName>CP</shortName>
        </alternativeName>
    </component>
    <component>
        <recommendedName>
            <fullName>Non-structural protein 3</fullName>
            <shortName>Nsp3</shortName>
        </recommendedName>
    </component>
    <component>
        <recommendedName>
            <fullName>3C-like serine proteinase</fullName>
            <shortName>3CLSP</shortName>
            <ecNumber>3.4.21.-</ecNumber>
        </recommendedName>
        <alternativeName>
            <fullName>Nsp4</fullName>
        </alternativeName>
    </component>
    <component>
        <recommendedName>
            <fullName>Non-structural protein 5-6-7</fullName>
            <shortName>Nsp5-6-7</shortName>
        </recommendedName>
    </component>
    <component>
        <recommendedName>
            <fullName>Non-structural protein 5</fullName>
            <shortName>Nsp5</shortName>
        </recommendedName>
    </component>
    <component>
        <recommendedName>
            <fullName>Non-structural protein 6</fullName>
            <shortName>Nsp6</shortName>
        </recommendedName>
    </component>
    <component>
        <recommendedName>
            <fullName>Non-structural protein 7-alpha</fullName>
            <shortName>Nsp7-alpha</shortName>
        </recommendedName>
    </component>
    <component>
        <recommendedName>
            <fullName>Non-structural protein 7-beta</fullName>
            <shortName>Nsp7-beta</shortName>
        </recommendedName>
    </component>
    <component>
        <recommendedName>
            <fullName>Non-structural protein 8</fullName>
            <shortName>Nsp8</shortName>
        </recommendedName>
    </component>
    <component>
        <recommendedName>
            <fullName>RNA-directed RNA polymerase</fullName>
            <shortName>Pol</shortName>
            <shortName>RdRp</shortName>
            <ecNumber>2.7.7.48</ecNumber>
        </recommendedName>
        <alternativeName>
            <fullName>Nsp9</fullName>
        </alternativeName>
    </component>
    <component>
        <recommendedName>
            <fullName>Helicase</fullName>
            <shortName>Hel</shortName>
            <ecNumber>3.6.4.12</ecNumber>
            <ecNumber>3.6.4.13</ecNumber>
        </recommendedName>
        <alternativeName>
            <fullName>Nsp10</fullName>
        </alternativeName>
    </component>
    <component>
        <recommendedName>
            <fullName>Uridylate-specific endoribonuclease nsp11</fullName>
            <ecNumber>4.6.1.-</ecNumber>
        </recommendedName>
        <alternativeName>
            <fullName>Non-structural protein 11</fullName>
            <shortName>Nsp11</shortName>
        </alternativeName>
    </component>
    <component>
        <recommendedName>
            <fullName>Non-structural protein 12</fullName>
            <shortName>Nsp12</shortName>
        </recommendedName>
    </component>
</protein>
<name>RPOA_LDVC</name>
<reference key="1">
    <citation type="journal article" date="1993" name="Virology">
        <title>Complete genomic sequence and phylogenetic analysis of the lactate dehydrogenase-elevating virus (LDV).</title>
        <authorList>
            <person name="Godeny E.K."/>
            <person name="Chen L."/>
            <person name="Kumar S.N."/>
            <person name="Methven S.L."/>
            <person name="Koonin E.V."/>
            <person name="Brinton M.A."/>
        </authorList>
    </citation>
    <scope>NUCLEOTIDE SEQUENCE [GENOMIC RNA]</scope>
</reference>
<gene>
    <name type="primary">rep</name>
    <name type="ORF">1a-1b</name>
</gene>
<keyword id="KW-0067">ATP-binding</keyword>
<keyword id="KW-0255">Endonuclease</keyword>
<keyword id="KW-0347">Helicase</keyword>
<keyword id="KW-1035">Host cytoplasm</keyword>
<keyword id="KW-1043">Host membrane</keyword>
<keyword id="KW-0378">Hydrolase</keyword>
<keyword id="KW-0456">Lyase</keyword>
<keyword id="KW-0472">Membrane</keyword>
<keyword id="KW-0479">Metal-binding</keyword>
<keyword id="KW-0540">Nuclease</keyword>
<keyword id="KW-0547">Nucleotide-binding</keyword>
<keyword id="KW-0548">Nucleotidyltransferase</keyword>
<keyword id="KW-0645">Protease</keyword>
<keyword id="KW-0688">Ribosomal frameshifting</keyword>
<keyword id="KW-0696">RNA-directed RNA polymerase</keyword>
<keyword id="KW-0720">Serine protease</keyword>
<keyword id="KW-0788">Thiol protease</keyword>
<keyword id="KW-0808">Transferase</keyword>
<keyword id="KW-0812">Transmembrane</keyword>
<keyword id="KW-1133">Transmembrane helix</keyword>
<keyword id="KW-0693">Viral RNA replication</keyword>
<keyword id="KW-0862">Zinc</keyword>
<keyword id="KW-0863">Zinc-finger</keyword>
<evidence type="ECO:0000250" key="1"/>
<evidence type="ECO:0000250" key="2">
    <source>
        <dbReference type="UniProtKB" id="P0C6X7"/>
    </source>
</evidence>
<evidence type="ECO:0000250" key="3">
    <source>
        <dbReference type="UniProtKB" id="P19811"/>
    </source>
</evidence>
<evidence type="ECO:0000255" key="4"/>
<evidence type="ECO:0000255" key="5">
    <source>
        <dbReference type="PROSITE-ProRule" id="PRU00539"/>
    </source>
</evidence>
<evidence type="ECO:0000255" key="6">
    <source>
        <dbReference type="PROSITE-ProRule" id="PRU00826"/>
    </source>
</evidence>
<evidence type="ECO:0000255" key="7">
    <source>
        <dbReference type="PROSITE-ProRule" id="PRU00871"/>
    </source>
</evidence>
<evidence type="ECO:0000255" key="8">
    <source>
        <dbReference type="PROSITE-ProRule" id="PRU00872"/>
    </source>
</evidence>
<evidence type="ECO:0000255" key="9">
    <source>
        <dbReference type="PROSITE-ProRule" id="PRU00873"/>
    </source>
</evidence>
<evidence type="ECO:0000255" key="10">
    <source>
        <dbReference type="PROSITE-ProRule" id="PRU00985"/>
    </source>
</evidence>
<evidence type="ECO:0000255" key="11">
    <source>
        <dbReference type="PROSITE-ProRule" id="PRU01292"/>
    </source>
</evidence>
<evidence type="ECO:0000255" key="12">
    <source>
        <dbReference type="PROSITE-ProRule" id="PRU01303"/>
    </source>
</evidence>
<evidence type="ECO:0000255" key="13">
    <source>
        <dbReference type="PROSITE-ProRule" id="PRU01306"/>
    </source>
</evidence>
<evidence type="ECO:0000256" key="14">
    <source>
        <dbReference type="SAM" id="MobiDB-lite"/>
    </source>
</evidence>
<evidence type="ECO:0000305" key="15"/>
<proteinExistence type="inferred from homology"/>
<accession>Q06502</accession>
<accession>Q06503</accession>